<keyword id="KW-0076">Bacteriochlorophyll</keyword>
<keyword id="KW-0997">Cell inner membrane</keyword>
<keyword id="KW-1003">Cell membrane</keyword>
<keyword id="KW-0148">Chlorophyll</keyword>
<keyword id="KW-0157">Chromophore</keyword>
<keyword id="KW-0249">Electron transport</keyword>
<keyword id="KW-0408">Iron</keyword>
<keyword id="KW-0460">Magnesium</keyword>
<keyword id="KW-0472">Membrane</keyword>
<keyword id="KW-0479">Metal-binding</keyword>
<keyword id="KW-0602">Photosynthesis</keyword>
<keyword id="KW-0674">Reaction center</keyword>
<keyword id="KW-0812">Transmembrane</keyword>
<keyword id="KW-1133">Transmembrane helix</keyword>
<keyword id="KW-0813">Transport</keyword>
<name>RCEL_ACIMU</name>
<feature type="chain" id="PRO_0000090398" description="Reaction center protein L chain">
    <location>
        <begin position="1" status="less than"/>
        <end position="255"/>
    </location>
</feature>
<feature type="transmembrane region" description="Helical" evidence="2">
    <location>
        <begin position="11"/>
        <end position="33"/>
    </location>
</feature>
<feature type="transmembrane region" description="Helical" evidence="2">
    <location>
        <begin position="61"/>
        <end position="89"/>
    </location>
</feature>
<feature type="transmembrane region" description="Helical" evidence="2">
    <location>
        <begin position="94"/>
        <end position="116"/>
    </location>
</feature>
<feature type="transmembrane region" description="Helical" evidence="2">
    <location>
        <begin position="149"/>
        <end position="176"/>
    </location>
</feature>
<feature type="transmembrane region" description="Helical" evidence="2">
    <location>
        <begin position="203"/>
        <end position="228"/>
    </location>
</feature>
<feature type="binding site" description="axial binding residue" evidence="1">
    <location>
        <position position="131"/>
    </location>
    <ligand>
        <name>(7R,8Z)-bacteriochlorophyll b</name>
        <dbReference type="ChEBI" id="CHEBI:30034"/>
    </ligand>
    <ligandPart>
        <name>Mg</name>
        <dbReference type="ChEBI" id="CHEBI:25107"/>
    </ligandPart>
</feature>
<feature type="binding site" description="axial binding residue" evidence="1">
    <location>
        <position position="151"/>
    </location>
    <ligand>
        <name>(7R,8Z)-bacteriochlorophyll b</name>
        <dbReference type="ChEBI" id="CHEBI:30034"/>
    </ligand>
    <ligandPart>
        <name>Mg</name>
        <dbReference type="ChEBI" id="CHEBI:25107"/>
    </ligandPart>
</feature>
<feature type="binding site" evidence="1">
    <location>
        <position position="168"/>
    </location>
    <ligand>
        <name>Fe cation</name>
        <dbReference type="ChEBI" id="CHEBI:24875"/>
    </ligand>
</feature>
<feature type="binding site" evidence="1">
    <location>
        <position position="194"/>
    </location>
    <ligand>
        <name>a ubiquinone</name>
        <dbReference type="ChEBI" id="CHEBI:16389"/>
    </ligand>
</feature>
<feature type="binding site" evidence="1">
    <location>
        <position position="208"/>
    </location>
    <ligand>
        <name>Fe cation</name>
        <dbReference type="ChEBI" id="CHEBI:24875"/>
    </ligand>
</feature>
<feature type="non-terminal residue">
    <location>
        <position position="1"/>
    </location>
</feature>
<comment type="function">
    <text>The reaction center is a membrane-bound complex that mediates the initial photochemical event in the electron transfer process of photosynthesis.</text>
</comment>
<comment type="subunit">
    <text>Reaction center is composed of four bacteriochlorophylls, two bacteriopheophytins, two ubiquinones, one iron, and two highly hydrophobic polypeptide chains (designated L and M).</text>
</comment>
<comment type="subcellular location">
    <subcellularLocation>
        <location evidence="1">Cell inner membrane</location>
        <topology evidence="1">Multi-pass membrane protein</topology>
    </subcellularLocation>
</comment>
<comment type="similarity">
    <text evidence="3">Belongs to the reaction center PufL/M/PsbA/D family.</text>
</comment>
<protein>
    <recommendedName>
        <fullName>Reaction center protein L chain</fullName>
    </recommendedName>
    <alternativeName>
        <fullName>Photosynthetic reaction center L subunit</fullName>
    </alternativeName>
</protein>
<evidence type="ECO:0000250" key="1"/>
<evidence type="ECO:0000255" key="2"/>
<evidence type="ECO:0000305" key="3"/>
<sequence length="255" mass="27905">DFWVGPFYVGFFGVTAAFFIMLGTALIIWGAALGPTWNIWQISIAPPDLSYGLGLAPLAKGGLWQIITVCAIGAFGSWALREVEISRKLGIGLHVPAAFSVAIFAYVTLEVIRPLLMGAWGNGFPYGIMSHLDWVSNTGYAYLNFEYNPMHMVAVTLFFTTTLALALHGSLVLAAINPPAGETVKFAEHEDTFFRDFIGYSIGTLGIHRLGLFLALGAGFASATCILLSGPFWTQGWPSWWGWWLHLPIWQFGGH</sequence>
<accession>O66139</accession>
<proteinExistence type="inferred from homology"/>
<dbReference type="EMBL" id="AB005221">
    <property type="protein sequence ID" value="BAA25563.1"/>
    <property type="molecule type" value="Genomic_DNA"/>
</dbReference>
<dbReference type="SMR" id="O66139"/>
<dbReference type="GO" id="GO:0005886">
    <property type="term" value="C:plasma membrane"/>
    <property type="evidence" value="ECO:0007669"/>
    <property type="project" value="UniProtKB-SubCell"/>
</dbReference>
<dbReference type="GO" id="GO:0030077">
    <property type="term" value="C:plasma membrane light-harvesting complex"/>
    <property type="evidence" value="ECO:0007669"/>
    <property type="project" value="InterPro"/>
</dbReference>
<dbReference type="GO" id="GO:0042314">
    <property type="term" value="F:bacteriochlorophyll binding"/>
    <property type="evidence" value="ECO:0007669"/>
    <property type="project" value="UniProtKB-KW"/>
</dbReference>
<dbReference type="GO" id="GO:0045156">
    <property type="term" value="F:electron transporter, transferring electrons within the cyclic electron transport pathway of photosynthesis activity"/>
    <property type="evidence" value="ECO:0007669"/>
    <property type="project" value="InterPro"/>
</dbReference>
<dbReference type="GO" id="GO:0046872">
    <property type="term" value="F:metal ion binding"/>
    <property type="evidence" value="ECO:0007669"/>
    <property type="project" value="UniProtKB-KW"/>
</dbReference>
<dbReference type="GO" id="GO:0009772">
    <property type="term" value="P:photosynthetic electron transport in photosystem II"/>
    <property type="evidence" value="ECO:0007669"/>
    <property type="project" value="InterPro"/>
</dbReference>
<dbReference type="Gene3D" id="1.20.85.10">
    <property type="entry name" value="Photosystem II protein D1-like"/>
    <property type="match status" value="2"/>
</dbReference>
<dbReference type="InterPro" id="IPR036854">
    <property type="entry name" value="Photo_II_D1/D2_sf"/>
</dbReference>
<dbReference type="InterPro" id="IPR005871">
    <property type="entry name" value="Photo_RC_L"/>
</dbReference>
<dbReference type="InterPro" id="IPR000484">
    <property type="entry name" value="Photo_RC_L/M"/>
</dbReference>
<dbReference type="InterPro" id="IPR055265">
    <property type="entry name" value="Photo_RC_L/M_CS"/>
</dbReference>
<dbReference type="NCBIfam" id="TIGR01157">
    <property type="entry name" value="pufL"/>
    <property type="match status" value="1"/>
</dbReference>
<dbReference type="Pfam" id="PF00124">
    <property type="entry name" value="Photo_RC"/>
    <property type="match status" value="1"/>
</dbReference>
<dbReference type="PRINTS" id="PR00256">
    <property type="entry name" value="REACTNCENTRE"/>
</dbReference>
<dbReference type="SUPFAM" id="SSF81483">
    <property type="entry name" value="Bacterial photosystem II reaction centre, L and M subunits"/>
    <property type="match status" value="1"/>
</dbReference>
<dbReference type="PROSITE" id="PS00244">
    <property type="entry name" value="REACTION_CENTER"/>
    <property type="match status" value="1"/>
</dbReference>
<reference key="1">
    <citation type="journal article" date="1997" name="Plant Cell Physiol.">
        <title>Nucleotide sequences of genes coding for photosynthetic reaction centers and light-harvesting proteins of Acidiphilium rubrum and related aerobic acidophilic bacteria.</title>
        <authorList>
            <person name="Nagashima K.V."/>
            <person name="Matsuura K."/>
            <person name="Wakao N."/>
            <person name="Hiraishi A."/>
            <person name="Shimada K."/>
        </authorList>
    </citation>
    <scope>NUCLEOTIDE SEQUENCE [GENOMIC DNA]</scope>
</reference>
<organism>
    <name type="scientific">Acidiphilium multivorum</name>
    <dbReference type="NCBI Taxonomy" id="62140"/>
    <lineage>
        <taxon>Bacteria</taxon>
        <taxon>Pseudomonadati</taxon>
        <taxon>Pseudomonadota</taxon>
        <taxon>Alphaproteobacteria</taxon>
        <taxon>Acetobacterales</taxon>
        <taxon>Acidocellaceae</taxon>
        <taxon>Acidiphilium</taxon>
    </lineage>
</organism>
<gene>
    <name type="primary">pufL</name>
</gene>